<sequence length="593" mass="66591">MLRTSVLRLLGRTGASRLSLLEDFGPRYYSSGSLSAGDDACDVRAYFTTPIFYVNAAPHIGHLYSALLADALCRHRRLRGPSTAATRFSTGTDEHGLKIQQAAATAGLAPTELCDRVSEQFQQLFQEAGISCTDFIRTTEARHRVAVQHFWGVLKSRGLLYKGVYEGWYCASDECFLPEAKVTQQPGPSGDSFPVSLESGHPVSWTKEENYIFRLSQFRKPLQRWLRGNPQAITPEPFHHVVLQWLDEELPDLSVSRRSSHLHWGIPVPGDDSQTIYVWLDALVNYLTVIGYPNAEFKSWWPATSHIIGKDILKFHAIYWPAFLLGAGMSPPQRICVHSHWTVCGQKMSKSLGNVVDPRTCLNRYTVDGFRYFLLRQGVPNWDCDYYDEKVVKLLNSELADALGGLLNRCTAKRINPSETYPAFCTTCFPSEPGLVGPSVRAQAEDYALVSAVATLPKQVADHYDNFRIYKALEAVSSCVRQTNGFVQRHAPWKLNWESPVDAPWLGTVLHVALECLRVFGTLLQPVTPSLADKLLSRLGVSASERSLGELYFLPRFYGHPCPFEGRRLGPETGLLFPRLDQSRTWLVKAHRT</sequence>
<organism>
    <name type="scientific">Homo sapiens</name>
    <name type="common">Human</name>
    <dbReference type="NCBI Taxonomy" id="9606"/>
    <lineage>
        <taxon>Eukaryota</taxon>
        <taxon>Metazoa</taxon>
        <taxon>Chordata</taxon>
        <taxon>Craniata</taxon>
        <taxon>Vertebrata</taxon>
        <taxon>Euteleostomi</taxon>
        <taxon>Mammalia</taxon>
        <taxon>Eutheria</taxon>
        <taxon>Euarchontoglires</taxon>
        <taxon>Primates</taxon>
        <taxon>Haplorrhini</taxon>
        <taxon>Catarrhini</taxon>
        <taxon>Hominidae</taxon>
        <taxon>Homo</taxon>
    </lineage>
</organism>
<gene>
    <name type="primary">MARS2</name>
</gene>
<keyword id="KW-0030">Aminoacyl-tRNA synthetase</keyword>
<keyword id="KW-0067">ATP-binding</keyword>
<keyword id="KW-0209">Deafness</keyword>
<keyword id="KW-0225">Disease variant</keyword>
<keyword id="KW-0436">Ligase</keyword>
<keyword id="KW-0496">Mitochondrion</keyword>
<keyword id="KW-0523">Neurodegeneration</keyword>
<keyword id="KW-0547">Nucleotide-binding</keyword>
<keyword id="KW-1274">Primary mitochondrial disease</keyword>
<keyword id="KW-0648">Protein biosynthesis</keyword>
<keyword id="KW-1267">Proteomics identification</keyword>
<keyword id="KW-1185">Reference proteome</keyword>
<keyword id="KW-0809">Transit peptide</keyword>
<comment type="catalytic activity">
    <reaction evidence="3">
        <text>tRNA(Met) + L-methionine + ATP = L-methionyl-tRNA(Met) + AMP + diphosphate</text>
        <dbReference type="Rhea" id="RHEA:13481"/>
        <dbReference type="Rhea" id="RHEA-COMP:9667"/>
        <dbReference type="Rhea" id="RHEA-COMP:9698"/>
        <dbReference type="ChEBI" id="CHEBI:30616"/>
        <dbReference type="ChEBI" id="CHEBI:33019"/>
        <dbReference type="ChEBI" id="CHEBI:57844"/>
        <dbReference type="ChEBI" id="CHEBI:78442"/>
        <dbReference type="ChEBI" id="CHEBI:78530"/>
        <dbReference type="ChEBI" id="CHEBI:456215"/>
        <dbReference type="EC" id="6.1.1.10"/>
    </reaction>
</comment>
<comment type="biophysicochemical properties">
    <kinetics>
        <KM evidence="3">18 uM for Met</KM>
        <KM evidence="3">85 uM for ATP</KM>
        <KM evidence="3">2.1 uM for tRNA-Met</KM>
    </kinetics>
    <phDependence>
        <text evidence="3">Optimum pH is 7.8-8.2.</text>
    </phDependence>
</comment>
<comment type="subcellular location">
    <subcellularLocation>
        <location evidence="6">Mitochondrion matrix</location>
    </subcellularLocation>
</comment>
<comment type="disease" evidence="4">
    <disease id="DI-04017">
        <name>Spastic ataxia 3, autosomal recessive</name>
        <acronym>SPAX3</acronym>
        <description>A neurologic disorder characterized by cerebellar ataxia, ataxic gait, spasticity, and hyperreflexia. Other variable features include dysarthria, dysmetria, mild cognitive impairment, urinary urgency and dystonic positioning.</description>
        <dbReference type="MIM" id="611390"/>
    </disease>
    <text>The disease is caused by variants affecting the gene represented in this entry.</text>
</comment>
<comment type="disease" evidence="5">
    <disease id="DI-04460">
        <name>Combined oxidative phosphorylation deficiency 25</name>
        <acronym>COXPD25</acronym>
        <description>A mitochondrial disorder resulting in developmental delay, growth failure, and sensorineural hearing loss.</description>
        <dbReference type="MIM" id="616430"/>
    </disease>
    <text>The disease is caused by variants affecting the gene represented in this entry.</text>
</comment>
<comment type="similarity">
    <text evidence="6">Belongs to the class-I aminoacyl-tRNA synthetase family.</text>
</comment>
<comment type="sequence caution" evidence="6">
    <conflict type="erroneous initiation">
        <sequence resource="EMBL-CDS" id="AAH09115"/>
    </conflict>
    <text>Extended N-terminus.</text>
</comment>
<comment type="sequence caution" evidence="6">
    <conflict type="erroneous initiation">
        <sequence resource="EMBL-CDS" id="AAH40934"/>
    </conflict>
    <text>Extended N-terminus.</text>
</comment>
<reference key="1">
    <citation type="submission" date="2003-03" db="EMBL/GenBank/DDBJ databases">
        <title>Downregulation of mitochondrial translation factors during the differentiation of HL-60 cells by TPA.</title>
        <authorList>
            <person name="Murata H."/>
            <person name="Takeuchi-Tomita N."/>
        </authorList>
    </citation>
    <scope>NUCLEOTIDE SEQUENCE [MRNA]</scope>
</reference>
<reference key="2">
    <citation type="journal article" date="2004" name="Nat. Genet.">
        <title>Complete sequencing and characterization of 21,243 full-length human cDNAs.</title>
        <authorList>
            <person name="Ota T."/>
            <person name="Suzuki Y."/>
            <person name="Nishikawa T."/>
            <person name="Otsuki T."/>
            <person name="Sugiyama T."/>
            <person name="Irie R."/>
            <person name="Wakamatsu A."/>
            <person name="Hayashi K."/>
            <person name="Sato H."/>
            <person name="Nagai K."/>
            <person name="Kimura K."/>
            <person name="Makita H."/>
            <person name="Sekine M."/>
            <person name="Obayashi M."/>
            <person name="Nishi T."/>
            <person name="Shibahara T."/>
            <person name="Tanaka T."/>
            <person name="Ishii S."/>
            <person name="Yamamoto J."/>
            <person name="Saito K."/>
            <person name="Kawai Y."/>
            <person name="Isono Y."/>
            <person name="Nakamura Y."/>
            <person name="Nagahari K."/>
            <person name="Murakami K."/>
            <person name="Yasuda T."/>
            <person name="Iwayanagi T."/>
            <person name="Wagatsuma M."/>
            <person name="Shiratori A."/>
            <person name="Sudo H."/>
            <person name="Hosoiri T."/>
            <person name="Kaku Y."/>
            <person name="Kodaira H."/>
            <person name="Kondo H."/>
            <person name="Sugawara M."/>
            <person name="Takahashi M."/>
            <person name="Kanda K."/>
            <person name="Yokoi T."/>
            <person name="Furuya T."/>
            <person name="Kikkawa E."/>
            <person name="Omura Y."/>
            <person name="Abe K."/>
            <person name="Kamihara K."/>
            <person name="Katsuta N."/>
            <person name="Sato K."/>
            <person name="Tanikawa M."/>
            <person name="Yamazaki M."/>
            <person name="Ninomiya K."/>
            <person name="Ishibashi T."/>
            <person name="Yamashita H."/>
            <person name="Murakawa K."/>
            <person name="Fujimori K."/>
            <person name="Tanai H."/>
            <person name="Kimata M."/>
            <person name="Watanabe M."/>
            <person name="Hiraoka S."/>
            <person name="Chiba Y."/>
            <person name="Ishida S."/>
            <person name="Ono Y."/>
            <person name="Takiguchi S."/>
            <person name="Watanabe S."/>
            <person name="Yosida M."/>
            <person name="Hotuta T."/>
            <person name="Kusano J."/>
            <person name="Kanehori K."/>
            <person name="Takahashi-Fujii A."/>
            <person name="Hara H."/>
            <person name="Tanase T.-O."/>
            <person name="Nomura Y."/>
            <person name="Togiya S."/>
            <person name="Komai F."/>
            <person name="Hara R."/>
            <person name="Takeuchi K."/>
            <person name="Arita M."/>
            <person name="Imose N."/>
            <person name="Musashino K."/>
            <person name="Yuuki H."/>
            <person name="Oshima A."/>
            <person name="Sasaki N."/>
            <person name="Aotsuka S."/>
            <person name="Yoshikawa Y."/>
            <person name="Matsunawa H."/>
            <person name="Ichihara T."/>
            <person name="Shiohata N."/>
            <person name="Sano S."/>
            <person name="Moriya S."/>
            <person name="Momiyama H."/>
            <person name="Satoh N."/>
            <person name="Takami S."/>
            <person name="Terashima Y."/>
            <person name="Suzuki O."/>
            <person name="Nakagawa S."/>
            <person name="Senoh A."/>
            <person name="Mizoguchi H."/>
            <person name="Goto Y."/>
            <person name="Shimizu F."/>
            <person name="Wakebe H."/>
            <person name="Hishigaki H."/>
            <person name="Watanabe T."/>
            <person name="Sugiyama A."/>
            <person name="Takemoto M."/>
            <person name="Kawakami B."/>
            <person name="Yamazaki M."/>
            <person name="Watanabe K."/>
            <person name="Kumagai A."/>
            <person name="Itakura S."/>
            <person name="Fukuzumi Y."/>
            <person name="Fujimori Y."/>
            <person name="Komiyama M."/>
            <person name="Tashiro H."/>
            <person name="Tanigami A."/>
            <person name="Fujiwara T."/>
            <person name="Ono T."/>
            <person name="Yamada K."/>
            <person name="Fujii Y."/>
            <person name="Ozaki K."/>
            <person name="Hirao M."/>
            <person name="Ohmori Y."/>
            <person name="Kawabata A."/>
            <person name="Hikiji T."/>
            <person name="Kobatake N."/>
            <person name="Inagaki H."/>
            <person name="Ikema Y."/>
            <person name="Okamoto S."/>
            <person name="Okitani R."/>
            <person name="Kawakami T."/>
            <person name="Noguchi S."/>
            <person name="Itoh T."/>
            <person name="Shigeta K."/>
            <person name="Senba T."/>
            <person name="Matsumura K."/>
            <person name="Nakajima Y."/>
            <person name="Mizuno T."/>
            <person name="Morinaga M."/>
            <person name="Sasaki M."/>
            <person name="Togashi T."/>
            <person name="Oyama M."/>
            <person name="Hata H."/>
            <person name="Watanabe M."/>
            <person name="Komatsu T."/>
            <person name="Mizushima-Sugano J."/>
            <person name="Satoh T."/>
            <person name="Shirai Y."/>
            <person name="Takahashi Y."/>
            <person name="Nakagawa K."/>
            <person name="Okumura K."/>
            <person name="Nagase T."/>
            <person name="Nomura N."/>
            <person name="Kikuchi H."/>
            <person name="Masuho Y."/>
            <person name="Yamashita R."/>
            <person name="Nakai K."/>
            <person name="Yada T."/>
            <person name="Nakamura Y."/>
            <person name="Ohara O."/>
            <person name="Isogai T."/>
            <person name="Sugano S."/>
        </authorList>
    </citation>
    <scope>NUCLEOTIDE SEQUENCE [LARGE SCALE MRNA]</scope>
    <source>
        <tissue>Trachea</tissue>
    </source>
</reference>
<reference key="3">
    <citation type="journal article" date="2005" name="Nature">
        <title>Generation and annotation of the DNA sequences of human chromosomes 2 and 4.</title>
        <authorList>
            <person name="Hillier L.W."/>
            <person name="Graves T.A."/>
            <person name="Fulton R.S."/>
            <person name="Fulton L.A."/>
            <person name="Pepin K.H."/>
            <person name="Minx P."/>
            <person name="Wagner-McPherson C."/>
            <person name="Layman D."/>
            <person name="Wylie K."/>
            <person name="Sekhon M."/>
            <person name="Becker M.C."/>
            <person name="Fewell G.A."/>
            <person name="Delehaunty K.D."/>
            <person name="Miner T.L."/>
            <person name="Nash W.E."/>
            <person name="Kremitzki C."/>
            <person name="Oddy L."/>
            <person name="Du H."/>
            <person name="Sun H."/>
            <person name="Bradshaw-Cordum H."/>
            <person name="Ali J."/>
            <person name="Carter J."/>
            <person name="Cordes M."/>
            <person name="Harris A."/>
            <person name="Isak A."/>
            <person name="van Brunt A."/>
            <person name="Nguyen C."/>
            <person name="Du F."/>
            <person name="Courtney L."/>
            <person name="Kalicki J."/>
            <person name="Ozersky P."/>
            <person name="Abbott S."/>
            <person name="Armstrong J."/>
            <person name="Belter E.A."/>
            <person name="Caruso L."/>
            <person name="Cedroni M."/>
            <person name="Cotton M."/>
            <person name="Davidson T."/>
            <person name="Desai A."/>
            <person name="Elliott G."/>
            <person name="Erb T."/>
            <person name="Fronick C."/>
            <person name="Gaige T."/>
            <person name="Haakenson W."/>
            <person name="Haglund K."/>
            <person name="Holmes A."/>
            <person name="Harkins R."/>
            <person name="Kim K."/>
            <person name="Kruchowski S.S."/>
            <person name="Strong C.M."/>
            <person name="Grewal N."/>
            <person name="Goyea E."/>
            <person name="Hou S."/>
            <person name="Levy A."/>
            <person name="Martinka S."/>
            <person name="Mead K."/>
            <person name="McLellan M.D."/>
            <person name="Meyer R."/>
            <person name="Randall-Maher J."/>
            <person name="Tomlinson C."/>
            <person name="Dauphin-Kohlberg S."/>
            <person name="Kozlowicz-Reilly A."/>
            <person name="Shah N."/>
            <person name="Swearengen-Shahid S."/>
            <person name="Snider J."/>
            <person name="Strong J.T."/>
            <person name="Thompson J."/>
            <person name="Yoakum M."/>
            <person name="Leonard S."/>
            <person name="Pearman C."/>
            <person name="Trani L."/>
            <person name="Radionenko M."/>
            <person name="Waligorski J.E."/>
            <person name="Wang C."/>
            <person name="Rock S.M."/>
            <person name="Tin-Wollam A.-M."/>
            <person name="Maupin R."/>
            <person name="Latreille P."/>
            <person name="Wendl M.C."/>
            <person name="Yang S.-P."/>
            <person name="Pohl C."/>
            <person name="Wallis J.W."/>
            <person name="Spieth J."/>
            <person name="Bieri T.A."/>
            <person name="Berkowicz N."/>
            <person name="Nelson J.O."/>
            <person name="Osborne J."/>
            <person name="Ding L."/>
            <person name="Meyer R."/>
            <person name="Sabo A."/>
            <person name="Shotland Y."/>
            <person name="Sinha P."/>
            <person name="Wohldmann P.E."/>
            <person name="Cook L.L."/>
            <person name="Hickenbotham M.T."/>
            <person name="Eldred J."/>
            <person name="Williams D."/>
            <person name="Jones T.A."/>
            <person name="She X."/>
            <person name="Ciccarelli F.D."/>
            <person name="Izaurralde E."/>
            <person name="Taylor J."/>
            <person name="Schmutz J."/>
            <person name="Myers R.M."/>
            <person name="Cox D.R."/>
            <person name="Huang X."/>
            <person name="McPherson J.D."/>
            <person name="Mardis E.R."/>
            <person name="Clifton S.W."/>
            <person name="Warren W.C."/>
            <person name="Chinwalla A.T."/>
            <person name="Eddy S.R."/>
            <person name="Marra M.A."/>
            <person name="Ovcharenko I."/>
            <person name="Furey T.S."/>
            <person name="Miller W."/>
            <person name="Eichler E.E."/>
            <person name="Bork P."/>
            <person name="Suyama M."/>
            <person name="Torrents D."/>
            <person name="Waterston R.H."/>
            <person name="Wilson R.K."/>
        </authorList>
    </citation>
    <scope>NUCLEOTIDE SEQUENCE [LARGE SCALE GENOMIC DNA]</scope>
</reference>
<reference key="4">
    <citation type="journal article" date="2004" name="Genome Res.">
        <title>The status, quality, and expansion of the NIH full-length cDNA project: the Mammalian Gene Collection (MGC).</title>
        <authorList>
            <consortium name="The MGC Project Team"/>
        </authorList>
    </citation>
    <scope>NUCLEOTIDE SEQUENCE [LARGE SCALE MRNA]</scope>
    <source>
        <tissue>Brain</tissue>
        <tissue>Colon</tissue>
    </source>
</reference>
<reference key="5">
    <citation type="journal article" date="2004" name="Biochemistry">
        <title>Characterization of the human mitochondrial methionyl-tRNA synthetase.</title>
        <authorList>
            <person name="Spencer A.C."/>
            <person name="Heck A."/>
            <person name="Takeuchi N."/>
            <person name="Watanabe K."/>
            <person name="Spremulli L.L."/>
        </authorList>
    </citation>
    <scope>ENZYME ACTIVITY</scope>
    <scope>BIOPHYSICOCHEMICAL PROPERTIES</scope>
</reference>
<reference key="6">
    <citation type="journal article" date="2011" name="BMC Syst. Biol.">
        <title>Initial characterization of the human central proteome.</title>
        <authorList>
            <person name="Burkard T.R."/>
            <person name="Planyavsky M."/>
            <person name="Kaupe I."/>
            <person name="Breitwieser F.P."/>
            <person name="Buerckstuemmer T."/>
            <person name="Bennett K.L."/>
            <person name="Superti-Furga G."/>
            <person name="Colinge J."/>
        </authorList>
    </citation>
    <scope>IDENTIFICATION BY MASS SPECTROMETRY [LARGE SCALE ANALYSIS]</scope>
</reference>
<reference key="7">
    <citation type="journal article" date="2012" name="PLoS Biol.">
        <title>Mutations in the mitochondrial methionyl-tRNA synthetase cause a neurodegenerative phenotype in flies and a recessive ataxia (ARSAL) in humans.</title>
        <authorList>
            <person name="Bayat V."/>
            <person name="Thiffault I."/>
            <person name="Jaiswal M."/>
            <person name="Tetreault M."/>
            <person name="Donti T."/>
            <person name="Sasarman F."/>
            <person name="Bernard G."/>
            <person name="Demers-Lamarche J."/>
            <person name="Dicaire M.J."/>
            <person name="Mathieu J."/>
            <person name="Vanasse M."/>
            <person name="Bouchard J.P."/>
            <person name="Rioux M.F."/>
            <person name="Lourenco C.M."/>
            <person name="Li Z."/>
            <person name="Haueter C."/>
            <person name="Shoubridge E.A."/>
            <person name="Graham B.H."/>
            <person name="Brais B."/>
            <person name="Bellen H.J."/>
        </authorList>
    </citation>
    <scope>INVOLVEMENT IN SPAX3</scope>
</reference>
<reference key="8">
    <citation type="journal article" date="2015" name="Hum. Mutat.">
        <title>Novel, compound heterozygous, single-nucleotide variants in MARS2 associated with developmental delay, poor growth, and sensorineural hearing loss.</title>
        <authorList>
            <person name="Webb B.D."/>
            <person name="Wheeler P.G."/>
            <person name="Hagen J.J."/>
            <person name="Cohen N."/>
            <person name="Linderman M.D."/>
            <person name="Diaz G.A."/>
            <person name="Naidich T.P."/>
            <person name="Rodenburg R.J."/>
            <person name="Houten S.M."/>
            <person name="Schadt E.E."/>
        </authorList>
    </citation>
    <scope>INVOLVEMENT IN COXPD25</scope>
    <scope>VARIANT COXPD25 TRP-142</scope>
</reference>
<reference key="9">
    <citation type="journal article" date="2015" name="Proteomics">
        <title>N-terminome analysis of the human mitochondrial proteome.</title>
        <authorList>
            <person name="Vaca Jacome A.S."/>
            <person name="Rabilloud T."/>
            <person name="Schaeffer-Reiss C."/>
            <person name="Rompais M."/>
            <person name="Ayoub D."/>
            <person name="Lane L."/>
            <person name="Bairoch A."/>
            <person name="Van Dorsselaer A."/>
            <person name="Carapito C."/>
        </authorList>
    </citation>
    <scope>IDENTIFICATION BY MASS SPECTROMETRY [LARGE SCALE ANALYSIS]</scope>
</reference>
<dbReference type="EC" id="6.1.1.10"/>
<dbReference type="EMBL" id="AB107013">
    <property type="protein sequence ID" value="BAC92749.1"/>
    <property type="molecule type" value="mRNA"/>
</dbReference>
<dbReference type="EMBL" id="AK098121">
    <property type="protein sequence ID" value="BAC05238.1"/>
    <property type="molecule type" value="mRNA"/>
</dbReference>
<dbReference type="EMBL" id="AC073058">
    <property type="protein sequence ID" value="AAX93244.1"/>
    <property type="molecule type" value="Genomic_DNA"/>
</dbReference>
<dbReference type="EMBL" id="BC009115">
    <property type="protein sequence ID" value="AAH09115.1"/>
    <property type="status" value="ALT_INIT"/>
    <property type="molecule type" value="mRNA"/>
</dbReference>
<dbReference type="EMBL" id="BC040934">
    <property type="protein sequence ID" value="AAH40934.1"/>
    <property type="status" value="ALT_INIT"/>
    <property type="molecule type" value="mRNA"/>
</dbReference>
<dbReference type="EMBL" id="BC126294">
    <property type="protein sequence ID" value="AAI26295.1"/>
    <property type="molecule type" value="mRNA"/>
</dbReference>
<dbReference type="CCDS" id="CCDS33358.1"/>
<dbReference type="RefSeq" id="NP_612404.1">
    <property type="nucleotide sequence ID" value="NM_138395.4"/>
</dbReference>
<dbReference type="SMR" id="Q96GW9"/>
<dbReference type="BioGRID" id="124988">
    <property type="interactions" value="53"/>
</dbReference>
<dbReference type="FunCoup" id="Q96GW9">
    <property type="interactions" value="877"/>
</dbReference>
<dbReference type="IntAct" id="Q96GW9">
    <property type="interactions" value="30"/>
</dbReference>
<dbReference type="STRING" id="9606.ENSP00000282276"/>
<dbReference type="BindingDB" id="Q96GW9"/>
<dbReference type="ChEMBL" id="CHEMBL4739700"/>
<dbReference type="DrugBank" id="DB00134">
    <property type="generic name" value="Methionine"/>
</dbReference>
<dbReference type="GlyCosmos" id="Q96GW9">
    <property type="glycosylation" value="1 site, 1 glycan"/>
</dbReference>
<dbReference type="GlyGen" id="Q96GW9">
    <property type="glycosylation" value="2 sites, 1 O-linked glycan (1 site)"/>
</dbReference>
<dbReference type="iPTMnet" id="Q96GW9"/>
<dbReference type="PhosphoSitePlus" id="Q96GW9"/>
<dbReference type="SwissPalm" id="Q96GW9"/>
<dbReference type="BioMuta" id="MARS2"/>
<dbReference type="DMDM" id="85541638"/>
<dbReference type="jPOST" id="Q96GW9"/>
<dbReference type="MassIVE" id="Q96GW9"/>
<dbReference type="PaxDb" id="9606-ENSP00000282276"/>
<dbReference type="PeptideAtlas" id="Q96GW9"/>
<dbReference type="ProteomicsDB" id="76673"/>
<dbReference type="Pumba" id="Q96GW9"/>
<dbReference type="Antibodypedia" id="50280">
    <property type="antibodies" value="117 antibodies from 23 providers"/>
</dbReference>
<dbReference type="DNASU" id="92935"/>
<dbReference type="Ensembl" id="ENST00000282276.8">
    <property type="protein sequence ID" value="ENSP00000282276.6"/>
    <property type="gene ID" value="ENSG00000247626.5"/>
</dbReference>
<dbReference type="GeneID" id="92935"/>
<dbReference type="KEGG" id="hsa:92935"/>
<dbReference type="MANE-Select" id="ENST00000282276.8">
    <property type="protein sequence ID" value="ENSP00000282276.6"/>
    <property type="RefSeq nucleotide sequence ID" value="NM_138395.4"/>
    <property type="RefSeq protein sequence ID" value="NP_612404.1"/>
</dbReference>
<dbReference type="UCSC" id="uc002uuq.4">
    <property type="organism name" value="human"/>
</dbReference>
<dbReference type="AGR" id="HGNC:25133"/>
<dbReference type="CTD" id="92935"/>
<dbReference type="DisGeNET" id="92935"/>
<dbReference type="GeneCards" id="MARS2"/>
<dbReference type="HGNC" id="HGNC:25133">
    <property type="gene designation" value="MARS2"/>
</dbReference>
<dbReference type="HPA" id="ENSG00000247626">
    <property type="expression patterns" value="Low tissue specificity"/>
</dbReference>
<dbReference type="MalaCards" id="MARS2"/>
<dbReference type="MIM" id="609728">
    <property type="type" value="gene"/>
</dbReference>
<dbReference type="MIM" id="611390">
    <property type="type" value="phenotype"/>
</dbReference>
<dbReference type="MIM" id="616430">
    <property type="type" value="phenotype"/>
</dbReference>
<dbReference type="neXtProt" id="NX_Q96GW9"/>
<dbReference type="OpenTargets" id="ENSG00000247626"/>
<dbReference type="Orphanet" id="314603">
    <property type="disease" value="Autosomal recessive spastic ataxia with leukoencephalopathy"/>
</dbReference>
<dbReference type="Orphanet" id="447954">
    <property type="disease" value="Combined oxidative phosphorylation defect type 25"/>
</dbReference>
<dbReference type="PharmGKB" id="PA134863396"/>
<dbReference type="VEuPathDB" id="HostDB:ENSG00000247626"/>
<dbReference type="eggNOG" id="KOG0436">
    <property type="taxonomic scope" value="Eukaryota"/>
</dbReference>
<dbReference type="GeneTree" id="ENSGT00550000075136"/>
<dbReference type="HOGENOM" id="CLU_009710_9_0_1"/>
<dbReference type="InParanoid" id="Q96GW9"/>
<dbReference type="OMA" id="NMFLPDR"/>
<dbReference type="OrthoDB" id="5844513at2759"/>
<dbReference type="PAN-GO" id="Q96GW9">
    <property type="GO annotations" value="2 GO annotations based on evolutionary models"/>
</dbReference>
<dbReference type="PhylomeDB" id="Q96GW9"/>
<dbReference type="TreeFam" id="TF105709"/>
<dbReference type="PathwayCommons" id="Q96GW9"/>
<dbReference type="Reactome" id="R-HSA-379726">
    <property type="pathway name" value="Mitochondrial tRNA aminoacylation"/>
</dbReference>
<dbReference type="SignaLink" id="Q96GW9"/>
<dbReference type="BioGRID-ORCS" id="92935">
    <property type="hits" value="650 hits in 1172 CRISPR screens"/>
</dbReference>
<dbReference type="GenomeRNAi" id="92935"/>
<dbReference type="Pharos" id="Q96GW9">
    <property type="development level" value="Tchem"/>
</dbReference>
<dbReference type="PRO" id="PR:Q96GW9"/>
<dbReference type="Proteomes" id="UP000005640">
    <property type="component" value="Chromosome 2"/>
</dbReference>
<dbReference type="RNAct" id="Q96GW9">
    <property type="molecule type" value="protein"/>
</dbReference>
<dbReference type="Bgee" id="ENSG00000247626">
    <property type="expression patterns" value="Expressed in primordial germ cell in gonad and 111 other cell types or tissues"/>
</dbReference>
<dbReference type="GO" id="GO:0005759">
    <property type="term" value="C:mitochondrial matrix"/>
    <property type="evidence" value="ECO:0000314"/>
    <property type="project" value="UniProtKB"/>
</dbReference>
<dbReference type="GO" id="GO:0005739">
    <property type="term" value="C:mitochondrion"/>
    <property type="evidence" value="ECO:0006056"/>
    <property type="project" value="FlyBase"/>
</dbReference>
<dbReference type="GO" id="GO:0005524">
    <property type="term" value="F:ATP binding"/>
    <property type="evidence" value="ECO:0007669"/>
    <property type="project" value="UniProtKB-KW"/>
</dbReference>
<dbReference type="GO" id="GO:0004825">
    <property type="term" value="F:methionine-tRNA ligase activity"/>
    <property type="evidence" value="ECO:0000314"/>
    <property type="project" value="UniProtKB"/>
</dbReference>
<dbReference type="GO" id="GO:0006431">
    <property type="term" value="P:methionyl-tRNA aminoacylation"/>
    <property type="evidence" value="ECO:0000314"/>
    <property type="project" value="UniProtKB"/>
</dbReference>
<dbReference type="GO" id="GO:0006418">
    <property type="term" value="P:tRNA aminoacylation for protein translation"/>
    <property type="evidence" value="ECO:0000304"/>
    <property type="project" value="Reactome"/>
</dbReference>
<dbReference type="CDD" id="cd07957">
    <property type="entry name" value="Anticodon_Ia_Met"/>
    <property type="match status" value="1"/>
</dbReference>
<dbReference type="CDD" id="cd00814">
    <property type="entry name" value="MetRS_core"/>
    <property type="match status" value="1"/>
</dbReference>
<dbReference type="FunFam" id="2.170.220.10:FF:000001">
    <property type="entry name" value="methionine--tRNA ligase, mitochondrial"/>
    <property type="match status" value="1"/>
</dbReference>
<dbReference type="FunFam" id="1.10.730.10:FF:000022">
    <property type="entry name" value="Methionyl-tRNA synthetase 2, mitochondrial"/>
    <property type="match status" value="1"/>
</dbReference>
<dbReference type="Gene3D" id="2.170.220.10">
    <property type="match status" value="1"/>
</dbReference>
<dbReference type="Gene3D" id="3.40.50.620">
    <property type="entry name" value="HUPs"/>
    <property type="match status" value="1"/>
</dbReference>
<dbReference type="Gene3D" id="1.10.730.10">
    <property type="entry name" value="Isoleucyl-tRNA Synthetase, Domain 1"/>
    <property type="match status" value="1"/>
</dbReference>
<dbReference type="InterPro" id="IPR041872">
    <property type="entry name" value="Anticodon_Met"/>
</dbReference>
<dbReference type="InterPro" id="IPR014758">
    <property type="entry name" value="Met-tRNA_synth"/>
</dbReference>
<dbReference type="InterPro" id="IPR023457">
    <property type="entry name" value="Met-tRNA_synth_2"/>
</dbReference>
<dbReference type="InterPro" id="IPR015413">
    <property type="entry name" value="Methionyl/Leucyl_tRNA_Synth"/>
</dbReference>
<dbReference type="InterPro" id="IPR033911">
    <property type="entry name" value="MetRS_core"/>
</dbReference>
<dbReference type="InterPro" id="IPR014729">
    <property type="entry name" value="Rossmann-like_a/b/a_fold"/>
</dbReference>
<dbReference type="InterPro" id="IPR009080">
    <property type="entry name" value="tRNAsynth_Ia_anticodon-bd"/>
</dbReference>
<dbReference type="NCBIfam" id="TIGR00398">
    <property type="entry name" value="metG"/>
    <property type="match status" value="1"/>
</dbReference>
<dbReference type="PANTHER" id="PTHR43326:SF1">
    <property type="entry name" value="METHIONINE--TRNA LIGASE, MITOCHONDRIAL"/>
    <property type="match status" value="1"/>
</dbReference>
<dbReference type="PANTHER" id="PTHR43326">
    <property type="entry name" value="METHIONYL-TRNA SYNTHETASE"/>
    <property type="match status" value="1"/>
</dbReference>
<dbReference type="Pfam" id="PF19303">
    <property type="entry name" value="Anticodon_3"/>
    <property type="match status" value="1"/>
</dbReference>
<dbReference type="Pfam" id="PF09334">
    <property type="entry name" value="tRNA-synt_1g"/>
    <property type="match status" value="1"/>
</dbReference>
<dbReference type="PRINTS" id="PR01041">
    <property type="entry name" value="TRNASYNTHMET"/>
</dbReference>
<dbReference type="SUPFAM" id="SSF47323">
    <property type="entry name" value="Anticodon-binding domain of a subclass of class I aminoacyl-tRNA synthetases"/>
    <property type="match status" value="1"/>
</dbReference>
<dbReference type="SUPFAM" id="SSF52374">
    <property type="entry name" value="Nucleotidylyl transferase"/>
    <property type="match status" value="1"/>
</dbReference>
<protein>
    <recommendedName>
        <fullName>Methionine--tRNA ligase, mitochondrial</fullName>
        <ecNumber>6.1.1.10</ecNumber>
    </recommendedName>
    <alternativeName>
        <fullName>Methionyl-tRNA synthetase 2</fullName>
    </alternativeName>
    <alternativeName>
        <fullName>Mitochondrial methionyl-tRNA synthetase</fullName>
        <shortName>MtMetRS</shortName>
    </alternativeName>
</protein>
<feature type="transit peptide" description="Mitochondrion" evidence="2">
    <location>
        <begin position="1"/>
        <end position="29"/>
    </location>
</feature>
<feature type="chain" id="PRO_0000045493" description="Methionine--tRNA ligase, mitochondrial">
    <location>
        <begin position="30"/>
        <end position="593"/>
    </location>
</feature>
<feature type="short sequence motif" description="'HIGH' region">
    <location>
        <begin position="52"/>
        <end position="62"/>
    </location>
</feature>
<feature type="short sequence motif" description="'KMSKS' region">
    <location>
        <begin position="347"/>
        <end position="351"/>
    </location>
</feature>
<feature type="binding site" evidence="1">
    <location>
        <position position="350"/>
    </location>
    <ligand>
        <name>ATP</name>
        <dbReference type="ChEBI" id="CHEBI:30616"/>
    </ligand>
</feature>
<feature type="sequence variant" id="VAR_073858" description="In COXPD25; dbSNP:rs794726870." evidence="5">
    <original>R</original>
    <variation>W</variation>
    <location>
        <position position="142"/>
    </location>
</feature>
<feature type="sequence conflict" description="In Ref. 1; BAC92749." evidence="6" ref="1">
    <original>LL</original>
    <variation>MM</variation>
    <location>
        <begin position="535"/>
        <end position="536"/>
    </location>
</feature>
<evidence type="ECO:0000250" key="1"/>
<evidence type="ECO:0000255" key="2"/>
<evidence type="ECO:0000269" key="3">
    <source>
    </source>
</evidence>
<evidence type="ECO:0000269" key="4">
    <source>
    </source>
</evidence>
<evidence type="ECO:0000269" key="5">
    <source>
    </source>
</evidence>
<evidence type="ECO:0000305" key="6"/>
<name>SYMM_HUMAN</name>
<proteinExistence type="evidence at protein level"/>
<accession>Q96GW9</accession>
<accession>A0AVC3</accession>
<accession>Q76E79</accession>
<accession>Q8IW62</accession>
<accession>Q8N7N4</accession>